<comment type="function">
    <text evidence="1">Converts heme B (protoheme IX) to heme O by substitution of the vinyl group on carbon 2 of heme B porphyrin ring with a hydroxyethyl farnesyl side group.</text>
</comment>
<comment type="catalytic activity">
    <reaction evidence="1">
        <text>heme b + (2E,6E)-farnesyl diphosphate + H2O = Fe(II)-heme o + diphosphate</text>
        <dbReference type="Rhea" id="RHEA:28070"/>
        <dbReference type="ChEBI" id="CHEBI:15377"/>
        <dbReference type="ChEBI" id="CHEBI:33019"/>
        <dbReference type="ChEBI" id="CHEBI:60344"/>
        <dbReference type="ChEBI" id="CHEBI:60530"/>
        <dbReference type="ChEBI" id="CHEBI:175763"/>
        <dbReference type="EC" id="2.5.1.141"/>
    </reaction>
</comment>
<comment type="pathway">
    <text evidence="1">Porphyrin-containing compound metabolism; heme O biosynthesis; heme O from protoheme: step 1/1.</text>
</comment>
<comment type="subcellular location">
    <subcellularLocation>
        <location evidence="1">Cell inner membrane</location>
        <topology evidence="1">Multi-pass membrane protein</topology>
    </subcellularLocation>
</comment>
<comment type="miscellaneous">
    <text evidence="1">Carbon 2 of the heme B porphyrin ring is defined according to the Fischer nomenclature.</text>
</comment>
<comment type="similarity">
    <text evidence="1">Belongs to the UbiA prenyltransferase family. Protoheme IX farnesyltransferase subfamily.</text>
</comment>
<proteinExistence type="inferred from homology"/>
<evidence type="ECO:0000255" key="1">
    <source>
        <dbReference type="HAMAP-Rule" id="MF_00154"/>
    </source>
</evidence>
<accession>A0L2I3</accession>
<keyword id="KW-0997">Cell inner membrane</keyword>
<keyword id="KW-1003">Cell membrane</keyword>
<keyword id="KW-0350">Heme biosynthesis</keyword>
<keyword id="KW-0472">Membrane</keyword>
<keyword id="KW-0808">Transferase</keyword>
<keyword id="KW-0812">Transmembrane</keyword>
<keyword id="KW-1133">Transmembrane helix</keyword>
<feature type="chain" id="PRO_0000326953" description="Protoheme IX farnesyltransferase 2">
    <location>
        <begin position="1"/>
        <end position="310"/>
    </location>
</feature>
<feature type="transmembrane region" description="Helical" evidence="1">
    <location>
        <begin position="25"/>
        <end position="45"/>
    </location>
</feature>
<feature type="transmembrane region" description="Helical" evidence="1">
    <location>
        <begin position="49"/>
        <end position="69"/>
    </location>
</feature>
<feature type="transmembrane region" description="Helical" evidence="1">
    <location>
        <begin position="98"/>
        <end position="118"/>
    </location>
</feature>
<feature type="transmembrane region" description="Helical" evidence="1">
    <location>
        <begin position="121"/>
        <end position="141"/>
    </location>
</feature>
<feature type="transmembrane region" description="Helical" evidence="1">
    <location>
        <begin position="145"/>
        <end position="165"/>
    </location>
</feature>
<feature type="transmembrane region" description="Helical" evidence="1">
    <location>
        <begin position="176"/>
        <end position="196"/>
    </location>
</feature>
<feature type="transmembrane region" description="Helical" evidence="1">
    <location>
        <begin position="222"/>
        <end position="242"/>
    </location>
</feature>
<feature type="transmembrane region" description="Helical" evidence="1">
    <location>
        <begin position="245"/>
        <end position="265"/>
    </location>
</feature>
<feature type="transmembrane region" description="Helical" evidence="1">
    <location>
        <begin position="277"/>
        <end position="297"/>
    </location>
</feature>
<dbReference type="EC" id="2.5.1.141" evidence="1"/>
<dbReference type="EMBL" id="CP000469">
    <property type="protein sequence ID" value="ABK50252.1"/>
    <property type="molecule type" value="Genomic_DNA"/>
</dbReference>
<dbReference type="SMR" id="A0L2I3"/>
<dbReference type="STRING" id="94122.Shewana3_4035"/>
<dbReference type="KEGG" id="shn:Shewana3_4035"/>
<dbReference type="eggNOG" id="COG0109">
    <property type="taxonomic scope" value="Bacteria"/>
</dbReference>
<dbReference type="HOGENOM" id="CLU_029631_0_0_6"/>
<dbReference type="OrthoDB" id="9814417at2"/>
<dbReference type="UniPathway" id="UPA00834">
    <property type="reaction ID" value="UER00712"/>
</dbReference>
<dbReference type="Proteomes" id="UP000002589">
    <property type="component" value="Chromosome"/>
</dbReference>
<dbReference type="GO" id="GO:0005886">
    <property type="term" value="C:plasma membrane"/>
    <property type="evidence" value="ECO:0007669"/>
    <property type="project" value="UniProtKB-SubCell"/>
</dbReference>
<dbReference type="GO" id="GO:0008495">
    <property type="term" value="F:protoheme IX farnesyltransferase activity"/>
    <property type="evidence" value="ECO:0007669"/>
    <property type="project" value="UniProtKB-UniRule"/>
</dbReference>
<dbReference type="GO" id="GO:0048034">
    <property type="term" value="P:heme O biosynthetic process"/>
    <property type="evidence" value="ECO:0007669"/>
    <property type="project" value="UniProtKB-UniRule"/>
</dbReference>
<dbReference type="CDD" id="cd13957">
    <property type="entry name" value="PT_UbiA_Cox10"/>
    <property type="match status" value="1"/>
</dbReference>
<dbReference type="FunFam" id="1.10.357.140:FF:000001">
    <property type="entry name" value="Protoheme IX farnesyltransferase"/>
    <property type="match status" value="1"/>
</dbReference>
<dbReference type="Gene3D" id="1.10.357.140">
    <property type="entry name" value="UbiA prenyltransferase"/>
    <property type="match status" value="1"/>
</dbReference>
<dbReference type="HAMAP" id="MF_00154">
    <property type="entry name" value="CyoE_CtaB"/>
    <property type="match status" value="1"/>
</dbReference>
<dbReference type="InterPro" id="IPR006369">
    <property type="entry name" value="Protohaem_IX_farnesylTrfase"/>
</dbReference>
<dbReference type="InterPro" id="IPR000537">
    <property type="entry name" value="UbiA_prenyltransferase"/>
</dbReference>
<dbReference type="InterPro" id="IPR030470">
    <property type="entry name" value="UbiA_prenylTrfase_CS"/>
</dbReference>
<dbReference type="InterPro" id="IPR044878">
    <property type="entry name" value="UbiA_sf"/>
</dbReference>
<dbReference type="NCBIfam" id="TIGR01473">
    <property type="entry name" value="cyoE_ctaB"/>
    <property type="match status" value="1"/>
</dbReference>
<dbReference type="NCBIfam" id="NF003348">
    <property type="entry name" value="PRK04375.1-1"/>
    <property type="match status" value="1"/>
</dbReference>
<dbReference type="PANTHER" id="PTHR43448">
    <property type="entry name" value="PROTOHEME IX FARNESYLTRANSFERASE, MITOCHONDRIAL"/>
    <property type="match status" value="1"/>
</dbReference>
<dbReference type="PANTHER" id="PTHR43448:SF2">
    <property type="entry name" value="PROTOHEME IX FARNESYLTRANSFERASE, MITOCHONDRIAL"/>
    <property type="match status" value="1"/>
</dbReference>
<dbReference type="Pfam" id="PF01040">
    <property type="entry name" value="UbiA"/>
    <property type="match status" value="1"/>
</dbReference>
<dbReference type="PROSITE" id="PS00943">
    <property type="entry name" value="UBIA"/>
    <property type="match status" value="1"/>
</dbReference>
<organism>
    <name type="scientific">Shewanella sp. (strain ANA-3)</name>
    <dbReference type="NCBI Taxonomy" id="94122"/>
    <lineage>
        <taxon>Bacteria</taxon>
        <taxon>Pseudomonadati</taxon>
        <taxon>Pseudomonadota</taxon>
        <taxon>Gammaproteobacteria</taxon>
        <taxon>Alteromonadales</taxon>
        <taxon>Shewanellaceae</taxon>
        <taxon>Shewanella</taxon>
    </lineage>
</organism>
<protein>
    <recommendedName>
        <fullName evidence="1">Protoheme IX farnesyltransferase 2</fullName>
        <ecNumber evidence="1">2.5.1.141</ecNumber>
    </recommendedName>
    <alternativeName>
        <fullName evidence="1">Heme B farnesyltransferase 2</fullName>
    </alternativeName>
    <alternativeName>
        <fullName evidence="1">Heme O synthase 2</fullName>
    </alternativeName>
</protein>
<gene>
    <name evidence="1" type="primary">cyoE2</name>
    <name type="ordered locus">Shewana3_4035</name>
</gene>
<name>CYOE2_SHESA</name>
<reference key="1">
    <citation type="submission" date="2006-09" db="EMBL/GenBank/DDBJ databases">
        <title>Complete sequence of chromosome 1 of Shewanella sp. ANA-3.</title>
        <authorList>
            <person name="Copeland A."/>
            <person name="Lucas S."/>
            <person name="Lapidus A."/>
            <person name="Barry K."/>
            <person name="Detter J.C."/>
            <person name="Glavina del Rio T."/>
            <person name="Hammon N."/>
            <person name="Israni S."/>
            <person name="Dalin E."/>
            <person name="Tice H."/>
            <person name="Pitluck S."/>
            <person name="Chertkov O."/>
            <person name="Brettin T."/>
            <person name="Bruce D."/>
            <person name="Han C."/>
            <person name="Tapia R."/>
            <person name="Gilna P."/>
            <person name="Schmutz J."/>
            <person name="Larimer F."/>
            <person name="Land M."/>
            <person name="Hauser L."/>
            <person name="Kyrpides N."/>
            <person name="Kim E."/>
            <person name="Newman D."/>
            <person name="Salticov C."/>
            <person name="Konstantinidis K."/>
            <person name="Klappenback J."/>
            <person name="Tiedje J."/>
            <person name="Richardson P."/>
        </authorList>
    </citation>
    <scope>NUCLEOTIDE SEQUENCE [LARGE SCALE GENOMIC DNA]</scope>
    <source>
        <strain>ANA-3</strain>
    </source>
</reference>
<sequence>MNTQARLTSTQWKARFKGYVQVTKPGIIFGNLISVAGGFLLAAKGDVDLVLMLASLVGLSLVVASGCAINNCIDRDIDAKMQRTCKRVTVTGEIPLSHVLLFGIALGVLGFGILALFTNALALLFAAIGYVVYVGIYSLYMKRNSVYGTLVGSFSGAVPPVVGYCSVTGQMDMGAVILLLMFSLWQMPHSYAIAIFRFNDYAAAKIPVLPVAEGMAKAKHHIVLYIAVFALVSTMLPLAGYTGTAFMAVTCATSLWWLTMALKGYRQDVDMPRWARQVFGFSIITITALSVTMALDFQAVSQTPLFTLVR</sequence>